<organism>
    <name type="scientific">Ralstonia nicotianae (strain ATCC BAA-1114 / GMI1000)</name>
    <name type="common">Ralstonia solanacearum</name>
    <dbReference type="NCBI Taxonomy" id="267608"/>
    <lineage>
        <taxon>Bacteria</taxon>
        <taxon>Pseudomonadati</taxon>
        <taxon>Pseudomonadota</taxon>
        <taxon>Betaproteobacteria</taxon>
        <taxon>Burkholderiales</taxon>
        <taxon>Burkholderiaceae</taxon>
        <taxon>Ralstonia</taxon>
        <taxon>Ralstonia solanacearum species complex</taxon>
    </lineage>
</organism>
<evidence type="ECO:0000250" key="1"/>
<evidence type="ECO:0000255" key="2"/>
<evidence type="ECO:0000305" key="3"/>
<comment type="function">
    <text evidence="1">Probably involved in polymerization and/or export of exopolysaccharide EPS I which functions as a virulence factor.</text>
</comment>
<comment type="subcellular location">
    <subcellularLocation>
        <location evidence="3">Cell outer membrane</location>
        <topology evidence="3">Multi-pass membrane protein</topology>
    </subcellularLocation>
</comment>
<comment type="similarity">
    <text evidence="3">Belongs to the BexD/CtrA/VexA family.</text>
</comment>
<dbReference type="EMBL" id="AL646053">
    <property type="protein sequence ID" value="CAD18171.1"/>
    <property type="molecule type" value="Genomic_DNA"/>
</dbReference>
<dbReference type="RefSeq" id="WP_011004310.1">
    <property type="nucleotide sequence ID" value="NC_003296.1"/>
</dbReference>
<dbReference type="SMR" id="P58597"/>
<dbReference type="STRING" id="267608.RSp1020"/>
<dbReference type="EnsemblBacteria" id="CAD18171">
    <property type="protein sequence ID" value="CAD18171"/>
    <property type="gene ID" value="RSp1020"/>
</dbReference>
<dbReference type="KEGG" id="rso:RSp1020"/>
<dbReference type="eggNOG" id="COG1596">
    <property type="taxonomic scope" value="Bacteria"/>
</dbReference>
<dbReference type="HOGENOM" id="CLU_038343_4_2_4"/>
<dbReference type="Proteomes" id="UP000001436">
    <property type="component" value="Plasmid megaplasmid Rsp"/>
</dbReference>
<dbReference type="GO" id="GO:0009279">
    <property type="term" value="C:cell outer membrane"/>
    <property type="evidence" value="ECO:0007669"/>
    <property type="project" value="UniProtKB-SubCell"/>
</dbReference>
<dbReference type="GO" id="GO:0046930">
    <property type="term" value="C:pore complex"/>
    <property type="evidence" value="ECO:0007669"/>
    <property type="project" value="UniProtKB-KW"/>
</dbReference>
<dbReference type="GO" id="GO:0015159">
    <property type="term" value="F:polysaccharide transmembrane transporter activity"/>
    <property type="evidence" value="ECO:0007669"/>
    <property type="project" value="InterPro"/>
</dbReference>
<dbReference type="GO" id="GO:0015288">
    <property type="term" value="F:porin activity"/>
    <property type="evidence" value="ECO:0007669"/>
    <property type="project" value="UniProtKB-KW"/>
</dbReference>
<dbReference type="GO" id="GO:0006811">
    <property type="term" value="P:monoatomic ion transport"/>
    <property type="evidence" value="ECO:0007669"/>
    <property type="project" value="UniProtKB-KW"/>
</dbReference>
<dbReference type="Gene3D" id="3.10.560.10">
    <property type="entry name" value="Outer membrane lipoprotein wza domain like"/>
    <property type="match status" value="2"/>
</dbReference>
<dbReference type="Gene3D" id="3.30.1950.10">
    <property type="entry name" value="wza like domain"/>
    <property type="match status" value="1"/>
</dbReference>
<dbReference type="InterPro" id="IPR049712">
    <property type="entry name" value="Poly_export"/>
</dbReference>
<dbReference type="InterPro" id="IPR003715">
    <property type="entry name" value="Poly_export_N"/>
</dbReference>
<dbReference type="InterPro" id="IPR054765">
    <property type="entry name" value="SLBB_dom"/>
</dbReference>
<dbReference type="PANTHER" id="PTHR33619">
    <property type="entry name" value="POLYSACCHARIDE EXPORT PROTEIN GFCE-RELATED"/>
    <property type="match status" value="1"/>
</dbReference>
<dbReference type="PANTHER" id="PTHR33619:SF3">
    <property type="entry name" value="POLYSACCHARIDE EXPORT PROTEIN GFCE-RELATED"/>
    <property type="match status" value="1"/>
</dbReference>
<dbReference type="Pfam" id="PF02563">
    <property type="entry name" value="Poly_export"/>
    <property type="match status" value="1"/>
</dbReference>
<dbReference type="Pfam" id="PF22461">
    <property type="entry name" value="SLBB_2"/>
    <property type="match status" value="2"/>
</dbReference>
<gene>
    <name type="primary">epsA</name>
    <name type="ordered locus">RSp1020</name>
    <name type="ORF">RS02354</name>
</gene>
<feature type="signal peptide" evidence="2">
    <location>
        <begin position="1"/>
        <end position="23"/>
    </location>
</feature>
<feature type="chain" id="PRO_0000025220" description="EPS I polysaccharide export outer membrane protein EpsA">
    <location>
        <begin position="24"/>
        <end position="381"/>
    </location>
</feature>
<feature type="lipid moiety-binding region" description="N-palmitoyl cysteine" evidence="1">
    <location>
        <position position="24"/>
    </location>
</feature>
<feature type="lipid moiety-binding region" description="S-diacylglycerol cysteine" evidence="1">
    <location>
        <position position="24"/>
    </location>
</feature>
<name>EPSA_RALN1</name>
<geneLocation type="plasmid">
    <name>megaplasmid Rsp</name>
</geneLocation>
<reference key="1">
    <citation type="journal article" date="2002" name="Nature">
        <title>Genome sequence of the plant pathogen Ralstonia solanacearum.</title>
        <authorList>
            <person name="Salanoubat M."/>
            <person name="Genin S."/>
            <person name="Artiguenave F."/>
            <person name="Gouzy J."/>
            <person name="Mangenot S."/>
            <person name="Arlat M."/>
            <person name="Billault A."/>
            <person name="Brottier P."/>
            <person name="Camus J.-C."/>
            <person name="Cattolico L."/>
            <person name="Chandler M."/>
            <person name="Choisne N."/>
            <person name="Claudel-Renard C."/>
            <person name="Cunnac S."/>
            <person name="Demange N."/>
            <person name="Gaspin C."/>
            <person name="Lavie M."/>
            <person name="Moisan A."/>
            <person name="Robert C."/>
            <person name="Saurin W."/>
            <person name="Schiex T."/>
            <person name="Siguier P."/>
            <person name="Thebault P."/>
            <person name="Whalen M."/>
            <person name="Wincker P."/>
            <person name="Levy M."/>
            <person name="Weissenbach J."/>
            <person name="Boucher C.A."/>
        </authorList>
    </citation>
    <scope>NUCLEOTIDE SEQUENCE [LARGE SCALE GENOMIC DNA]</scope>
    <source>
        <strain>ATCC BAA-1114 / GMI1000</strain>
    </source>
</reference>
<proteinExistence type="inferred from homology"/>
<sequence length="381" mass="40633">MFVSIPNIRKAVVSLSVVPLLAACAFAPGMRFDPQRPLDPADNASVPKITPITPDLVRAGQTQAQVQASHENADVGPLLAKATPYRIGTGDILSIVVWDHPELVFPTQTYSIGSTYDLASFGGAPSVSGYVVSTGGDIQFPYAGVIKVAGKTQNEVRDEISRGIARVVKDPQVTVRVLAYRSQRVYVDGEVKTPGQQSIDDVPMTLVEALNRAGGINTTTGDNSRIRLTRGGKQWTLSMPALMQQGIDPANILLRGGDIVRVEQREDSKVFVTGEVVRPSTVLPRNGRLTLSEALGEAGGVSPVSSDPRNVYVIRRAAEGEPQVYHLDAKSPVALALAEGFELKPKDVVYVDAGSLVRWSRVINLLVPTATPLIGAAAVAK</sequence>
<accession>P58597</accession>
<protein>
    <recommendedName>
        <fullName>EPS I polysaccharide export outer membrane protein EpsA</fullName>
    </recommendedName>
</protein>
<keyword id="KW-0998">Cell outer membrane</keyword>
<keyword id="KW-0406">Ion transport</keyword>
<keyword id="KW-0449">Lipoprotein</keyword>
<keyword id="KW-0472">Membrane</keyword>
<keyword id="KW-0564">Palmitate</keyword>
<keyword id="KW-0614">Plasmid</keyword>
<keyword id="KW-0625">Polysaccharide transport</keyword>
<keyword id="KW-0626">Porin</keyword>
<keyword id="KW-1185">Reference proteome</keyword>
<keyword id="KW-0732">Signal</keyword>
<keyword id="KW-0762">Sugar transport</keyword>
<keyword id="KW-0812">Transmembrane</keyword>
<keyword id="KW-1134">Transmembrane beta strand</keyword>
<keyword id="KW-0813">Transport</keyword>
<keyword id="KW-0843">Virulence</keyword>